<reference key="1">
    <citation type="journal article" date="1993" name="Gene">
        <title>Characterization of a cDNA encoding the beta-chain of baboon receptor glycoprotein GPIb.</title>
        <authorList>
            <person name="Hayzer D.J."/>
            <person name="Shoji M."/>
            <person name="Kim T.M."/>
            <person name="Runge M.S."/>
            <person name="Hanson S.R."/>
        </authorList>
    </citation>
    <scope>NUCLEOTIDE SEQUENCE [MRNA]</scope>
</reference>
<protein>
    <recommendedName>
        <fullName>Platelet glycoprotein Ib beta chain</fullName>
        <shortName>GP-Ib beta</shortName>
        <shortName>GPIb-beta</shortName>
        <shortName>GPIbB</shortName>
    </recommendedName>
    <alternativeName>
        <fullName>Antigen CD42b-beta</fullName>
    </alternativeName>
    <cdAntigenName>CD42c</cdAntigenName>
</protein>
<sequence length="208" mass="21985">MGSGPRGAVSLLLLMLAPPSCPAADCPAPCSCAGTLVDCGRRGLTWASLPTSFPVHTTELVLTGNNLTALPSGLLDALPAVRTAHLGANPWRCDCRLVPLRAWLAGRPERAPYRDLRCVAPPAVRGRLLPYLAEDDVRAACAPGPLCWGALAAELALLGLGLLHALLLVLLLCRLRRLRARARARARAALRLSLTDPLVAEQDGTDES</sequence>
<evidence type="ECO:0000250" key="1"/>
<evidence type="ECO:0000250" key="2">
    <source>
        <dbReference type="UniProtKB" id="P13224"/>
    </source>
</evidence>
<evidence type="ECO:0000255" key="3"/>
<comment type="function">
    <text>Gp-Ib, a surface membrane protein of platelets, participates in the formation of platelet plugs by binding to von Willebrand factor, which is already bound to the subendothelium.</text>
</comment>
<comment type="subunit">
    <text evidence="1">Two GP-Ib beta are disulfide-linked to one GP-Ib alpha. GP-IX is complexed with the GP-Ib heterodimer via a non covalent linkage. Interacts with TRAF4 (By similarity).</text>
</comment>
<comment type="subcellular location">
    <subcellularLocation>
        <location>Membrane</location>
        <topology>Single-pass type I membrane protein</topology>
    </subcellularLocation>
</comment>
<comment type="miscellaneous">
    <text>Platelet activation apparently involves disruption of the macromolecular complex of GP-Ib with the platelet glycoprotein IX (GP-IX) and dissociation of GP-Ib from the actin-binding protein.</text>
</comment>
<gene>
    <name type="primary">GP1BB</name>
</gene>
<keyword id="KW-0094">Blood coagulation</keyword>
<keyword id="KW-0130">Cell adhesion</keyword>
<keyword id="KW-1015">Disulfide bond</keyword>
<keyword id="KW-0325">Glycoprotein</keyword>
<keyword id="KW-0356">Hemostasis</keyword>
<keyword id="KW-0433">Leucine-rich repeat</keyword>
<keyword id="KW-0472">Membrane</keyword>
<keyword id="KW-0597">Phosphoprotein</keyword>
<keyword id="KW-0732">Signal</keyword>
<keyword id="KW-0812">Transmembrane</keyword>
<keyword id="KW-1133">Transmembrane helix</keyword>
<accession>Q04785</accession>
<name>GP1BB_PAPCY</name>
<feature type="signal peptide" evidence="1">
    <location>
        <begin position="1"/>
        <end position="26"/>
    </location>
</feature>
<feature type="chain" id="PRO_0000021347" description="Platelet glycoprotein Ib beta chain">
    <location>
        <begin position="27"/>
        <end position="208"/>
    </location>
</feature>
<feature type="topological domain" description="Extracellular" evidence="3">
    <location>
        <begin position="27"/>
        <end position="147"/>
    </location>
</feature>
<feature type="transmembrane region" description="Helical" evidence="1">
    <location>
        <begin position="148"/>
        <end position="172"/>
    </location>
</feature>
<feature type="topological domain" description="Cytoplasmic" evidence="3">
    <location>
        <begin position="173"/>
        <end position="208"/>
    </location>
</feature>
<feature type="domain" description="LRRNT">
    <location>
        <begin position="27"/>
        <end position="55"/>
    </location>
</feature>
<feature type="repeat" description="LRR">
    <location>
        <begin position="60"/>
        <end position="83"/>
    </location>
</feature>
<feature type="domain" description="LRRCT">
    <location>
        <begin position="89"/>
        <end position="143"/>
    </location>
</feature>
<feature type="modified residue" description="Phosphoserine; by PKA" evidence="2">
    <location>
        <position position="193"/>
    </location>
</feature>
<feature type="modified residue" description="Phosphothreonine" evidence="2">
    <location>
        <position position="195"/>
    </location>
</feature>
<feature type="glycosylation site" description="N-linked (GlcNAc...) asparagine" evidence="3">
    <location>
        <position position="66"/>
    </location>
</feature>
<feature type="disulfide bond" evidence="1">
    <location>
        <begin position="26"/>
        <end position="32"/>
    </location>
</feature>
<feature type="disulfide bond" evidence="1">
    <location>
        <begin position="30"/>
        <end position="39"/>
    </location>
</feature>
<feature type="disulfide bond" evidence="1">
    <location>
        <begin position="93"/>
        <end position="118"/>
    </location>
</feature>
<feature type="disulfide bond" evidence="1">
    <location>
        <begin position="95"/>
        <end position="141"/>
    </location>
</feature>
<feature type="disulfide bond" description="Interchain (with C-? in GP1BA)" evidence="1">
    <location>
        <position position="147"/>
    </location>
</feature>
<proteinExistence type="evidence at transcript level"/>
<dbReference type="EMBL" id="L05927">
    <property type="protein sequence ID" value="AAA35386.1"/>
    <property type="molecule type" value="mRNA"/>
</dbReference>
<dbReference type="SMR" id="Q04785"/>
<dbReference type="GlyCosmos" id="Q04785">
    <property type="glycosylation" value="1 site, No reported glycans"/>
</dbReference>
<dbReference type="GO" id="GO:0016020">
    <property type="term" value="C:membrane"/>
    <property type="evidence" value="ECO:0007669"/>
    <property type="project" value="UniProtKB-SubCell"/>
</dbReference>
<dbReference type="GO" id="GO:0007596">
    <property type="term" value="P:blood coagulation"/>
    <property type="evidence" value="ECO:0007669"/>
    <property type="project" value="UniProtKB-KW"/>
</dbReference>
<dbReference type="GO" id="GO:0007155">
    <property type="term" value="P:cell adhesion"/>
    <property type="evidence" value="ECO:0007669"/>
    <property type="project" value="UniProtKB-KW"/>
</dbReference>
<dbReference type="FunFam" id="3.80.10.10:FF:000441">
    <property type="entry name" value="Platelet glycoprotein Ib beta chain"/>
    <property type="match status" value="1"/>
</dbReference>
<dbReference type="Gene3D" id="3.80.10.10">
    <property type="entry name" value="Ribonuclease Inhibitor"/>
    <property type="match status" value="1"/>
</dbReference>
<dbReference type="InterPro" id="IPR000483">
    <property type="entry name" value="Cys-rich_flank_reg_C"/>
</dbReference>
<dbReference type="InterPro" id="IPR052313">
    <property type="entry name" value="GPIb-IX-V_Complex"/>
</dbReference>
<dbReference type="InterPro" id="IPR032675">
    <property type="entry name" value="LRR_dom_sf"/>
</dbReference>
<dbReference type="InterPro" id="IPR000372">
    <property type="entry name" value="LRRNT"/>
</dbReference>
<dbReference type="PANTHER" id="PTHR22650">
    <property type="entry name" value="GLYCOPROTEIN IB BETA"/>
    <property type="match status" value="1"/>
</dbReference>
<dbReference type="PANTHER" id="PTHR22650:SF7">
    <property type="entry name" value="PLATELET GLYCOPROTEIN IB BETA CHAIN"/>
    <property type="match status" value="1"/>
</dbReference>
<dbReference type="Pfam" id="PF01462">
    <property type="entry name" value="LRRNT"/>
    <property type="match status" value="1"/>
</dbReference>
<dbReference type="SMART" id="SM00082">
    <property type="entry name" value="LRRCT"/>
    <property type="match status" value="1"/>
</dbReference>
<dbReference type="SMART" id="SM00013">
    <property type="entry name" value="LRRNT"/>
    <property type="match status" value="1"/>
</dbReference>
<dbReference type="SUPFAM" id="SSF52058">
    <property type="entry name" value="L domain-like"/>
    <property type="match status" value="1"/>
</dbReference>
<organism>
    <name type="scientific">Papio cynocephalus</name>
    <name type="common">Yellow baboon</name>
    <dbReference type="NCBI Taxonomy" id="9556"/>
    <lineage>
        <taxon>Eukaryota</taxon>
        <taxon>Metazoa</taxon>
        <taxon>Chordata</taxon>
        <taxon>Craniata</taxon>
        <taxon>Vertebrata</taxon>
        <taxon>Euteleostomi</taxon>
        <taxon>Mammalia</taxon>
        <taxon>Eutheria</taxon>
        <taxon>Euarchontoglires</taxon>
        <taxon>Primates</taxon>
        <taxon>Haplorrhini</taxon>
        <taxon>Catarrhini</taxon>
        <taxon>Cercopithecidae</taxon>
        <taxon>Cercopithecinae</taxon>
        <taxon>Papio</taxon>
    </lineage>
</organism>